<organism>
    <name type="scientific">Coxiella burnetii (strain CbuK_Q154)</name>
    <name type="common">Coxiella burnetii (strain Q154)</name>
    <dbReference type="NCBI Taxonomy" id="434924"/>
    <lineage>
        <taxon>Bacteria</taxon>
        <taxon>Pseudomonadati</taxon>
        <taxon>Pseudomonadota</taxon>
        <taxon>Gammaproteobacteria</taxon>
        <taxon>Legionellales</taxon>
        <taxon>Coxiellaceae</taxon>
        <taxon>Coxiella</taxon>
    </lineage>
</organism>
<reference key="1">
    <citation type="journal article" date="2009" name="Infect. Immun.">
        <title>Comparative genomics reveal extensive transposon-mediated genomic plasticity and diversity among potential effector proteins within the genus Coxiella.</title>
        <authorList>
            <person name="Beare P.A."/>
            <person name="Unsworth N."/>
            <person name="Andoh M."/>
            <person name="Voth D.E."/>
            <person name="Omsland A."/>
            <person name="Gilk S.D."/>
            <person name="Williams K.P."/>
            <person name="Sobral B.W."/>
            <person name="Kupko J.J. III"/>
            <person name="Porcella S.F."/>
            <person name="Samuel J.E."/>
            <person name="Heinzen R.A."/>
        </authorList>
    </citation>
    <scope>NUCLEOTIDE SEQUENCE [LARGE SCALE GENOMIC DNA]</scope>
    <source>
        <strain>CbuK_Q154</strain>
    </source>
</reference>
<protein>
    <recommendedName>
        <fullName evidence="1">DNA repair protein RecO</fullName>
    </recommendedName>
    <alternativeName>
        <fullName evidence="1">Recombination protein O</fullName>
    </alternativeName>
</protein>
<comment type="function">
    <text evidence="1">Involved in DNA repair and RecF pathway recombination.</text>
</comment>
<comment type="similarity">
    <text evidence="1">Belongs to the RecO family.</text>
</comment>
<proteinExistence type="inferred from homology"/>
<evidence type="ECO:0000255" key="1">
    <source>
        <dbReference type="HAMAP-Rule" id="MF_00201"/>
    </source>
</evidence>
<keyword id="KW-0227">DNA damage</keyword>
<keyword id="KW-0233">DNA recombination</keyword>
<keyword id="KW-0234">DNA repair</keyword>
<feature type="chain" id="PRO_1000099374" description="DNA repair protein RecO">
    <location>
        <begin position="1"/>
        <end position="231"/>
    </location>
</feature>
<accession>B6J4J7</accession>
<sequence>MTKRVALEPAFILHRRPYSNTSLILELLTPNHGRVCALARSARGLKSRYKGKLELFSPLLISWSGRSDLKFLGDVEANGMPYLLEGEALLCGFYLNELLIRLLHHDDPYLRLFHHYQNTLEKLVNGRLEATLRCFEKQLLDELGYGLPLSCDVEMKLPFKPDQFYQYLPDRGFLLCEKSEERDVFSGKSLLALQEESFSDESSLKEIKYLMRLTLNRLLGKKPLKTRELLF</sequence>
<dbReference type="EMBL" id="CP001020">
    <property type="protein sequence ID" value="ACJ20862.1"/>
    <property type="molecule type" value="Genomic_DNA"/>
</dbReference>
<dbReference type="RefSeq" id="WP_005772032.1">
    <property type="nucleotide sequence ID" value="NC_011528.1"/>
</dbReference>
<dbReference type="SMR" id="B6J4J7"/>
<dbReference type="KEGG" id="cbc:CbuK_1729"/>
<dbReference type="HOGENOM" id="CLU_066645_1_0_6"/>
<dbReference type="GO" id="GO:0043590">
    <property type="term" value="C:bacterial nucleoid"/>
    <property type="evidence" value="ECO:0007669"/>
    <property type="project" value="TreeGrafter"/>
</dbReference>
<dbReference type="GO" id="GO:0006310">
    <property type="term" value="P:DNA recombination"/>
    <property type="evidence" value="ECO:0007669"/>
    <property type="project" value="UniProtKB-UniRule"/>
</dbReference>
<dbReference type="GO" id="GO:0006302">
    <property type="term" value="P:double-strand break repair"/>
    <property type="evidence" value="ECO:0007669"/>
    <property type="project" value="TreeGrafter"/>
</dbReference>
<dbReference type="Gene3D" id="2.40.50.140">
    <property type="entry name" value="Nucleic acid-binding proteins"/>
    <property type="match status" value="1"/>
</dbReference>
<dbReference type="Gene3D" id="1.20.1440.120">
    <property type="entry name" value="Recombination protein O, C-terminal domain"/>
    <property type="match status" value="1"/>
</dbReference>
<dbReference type="HAMAP" id="MF_00201">
    <property type="entry name" value="RecO"/>
    <property type="match status" value="1"/>
</dbReference>
<dbReference type="InterPro" id="IPR037278">
    <property type="entry name" value="ARFGAP/RecO"/>
</dbReference>
<dbReference type="InterPro" id="IPR022572">
    <property type="entry name" value="DNA_rep/recomb_RecO_N"/>
</dbReference>
<dbReference type="InterPro" id="IPR012340">
    <property type="entry name" value="NA-bd_OB-fold"/>
</dbReference>
<dbReference type="InterPro" id="IPR003717">
    <property type="entry name" value="RecO"/>
</dbReference>
<dbReference type="InterPro" id="IPR042242">
    <property type="entry name" value="RecO_C"/>
</dbReference>
<dbReference type="NCBIfam" id="TIGR00613">
    <property type="entry name" value="reco"/>
    <property type="match status" value="1"/>
</dbReference>
<dbReference type="PANTHER" id="PTHR33991">
    <property type="entry name" value="DNA REPAIR PROTEIN RECO"/>
    <property type="match status" value="1"/>
</dbReference>
<dbReference type="PANTHER" id="PTHR33991:SF1">
    <property type="entry name" value="DNA REPAIR PROTEIN RECO"/>
    <property type="match status" value="1"/>
</dbReference>
<dbReference type="Pfam" id="PF02565">
    <property type="entry name" value="RecO_C"/>
    <property type="match status" value="1"/>
</dbReference>
<dbReference type="Pfam" id="PF11967">
    <property type="entry name" value="RecO_N"/>
    <property type="match status" value="1"/>
</dbReference>
<dbReference type="SUPFAM" id="SSF57863">
    <property type="entry name" value="ArfGap/RecO-like zinc finger"/>
    <property type="match status" value="1"/>
</dbReference>
<dbReference type="SUPFAM" id="SSF50249">
    <property type="entry name" value="Nucleic acid-binding proteins"/>
    <property type="match status" value="1"/>
</dbReference>
<name>RECO_COXB1</name>
<gene>
    <name evidence="1" type="primary">recO</name>
    <name type="ordered locus">CbuK_1729</name>
</gene>